<reference key="1">
    <citation type="submission" date="2007-03" db="EMBL/GenBank/DDBJ databases">
        <title>The NIAID influenza genome sequencing project.</title>
        <authorList>
            <person name="Ghedin E."/>
            <person name="Spiro D."/>
            <person name="Miller N."/>
            <person name="Zaborsky J."/>
            <person name="Feldblyum T."/>
            <person name="Subbu V."/>
            <person name="Shumway M."/>
            <person name="Sparenborg J."/>
            <person name="Groveman L."/>
            <person name="Halpin R."/>
            <person name="Sitz J."/>
            <person name="Koo H."/>
            <person name="Salzberg S.L."/>
            <person name="Webster R.G."/>
            <person name="Hoffmann E."/>
            <person name="Krauss S."/>
            <person name="Naeve C."/>
            <person name="Bao Y."/>
            <person name="Bolotov P."/>
            <person name="Dernovoy D."/>
            <person name="Kiryutin B."/>
            <person name="Lipman D.J."/>
            <person name="Tatusova T."/>
        </authorList>
    </citation>
    <scope>NUCLEOTIDE SEQUENCE [GENOMIC RNA]</scope>
</reference>
<reference key="2">
    <citation type="submission" date="2007-03" db="EMBL/GenBank/DDBJ databases">
        <authorList>
            <consortium name="The NIAID Influenza Genome Sequencing Consortium"/>
        </authorList>
    </citation>
    <scope>NUCLEOTIDE SEQUENCE [GENOMIC RNA]</scope>
</reference>
<proteinExistence type="inferred from homology"/>
<sequence length="759" mass="85993">MERIKELRNLMSQSRTREILTKTTVDHMAIIKKYTSGRQEKNPSLRMKWMMAMKYPITADKRITEMIPERNEQGQTLWSKMNDAGSDRVMVSPLAVTWWNRNGPVTSTVHYPKIYKTYFEKVERLKHGTFGPVHFRNQVKIRRRVDINPGHADLSAKEAQDVIMEVVFPNEVGARILTSESQLTITKEKKEELQNCKISPLLVAYMLERELVRKTRFLPVAGGTSSVYIEVLHLTQGTCWEQMYTPGGEVRNDDVDQSLIIAARNIVRRAAVSADPLASLLEMCHSTQIGGTRMVDILRQNPTEEQAVDICKAAMGLRISSSFSFGGFTFKRTSGSSVKREEEVLTGNLQTLKIKVHEGYEEFTMVGKRATAILRKATRRLIQLIVSGRDEQSIVEAIVVAMVFSQEDCMIKAVRGDLNFVNRANQRLNPMHQLLRHFQKDAKVLFQNWGIEPIDNVMGMIGILPDMTPSTEMSMRGVRVSKMGVDEYSNAERVVVSIDRFLRVRDQRGNVLLSPEEVSETQGTEKLTITYSSSMMWEINGPESVLVNTYQWIIRNWETVKIQWSQNPTMLYNKMEFEPFQSLVPKAIRGQYSGFVRTLFQQMRDVLGTFDTTQIIKLLPFAAAPPKQSRMQFSSLTVNVRGSGMRILVRGNSPVFNYNKTTKRLTVLGKDAGTLTEDPDEGTAGVESAVLRGFLILGKEDRRYGPALSINELSNLAKGEKANVLIGQGDVVLVMKRKRDSSILTDSQTATKRIRMAIN</sequence>
<feature type="chain" id="PRO_0000373039" description="Polymerase basic protein 2">
    <location>
        <begin position="1"/>
        <end position="759"/>
    </location>
</feature>
<feature type="short sequence motif" description="Nuclear localization signal" evidence="1">
    <location>
        <begin position="736"/>
        <end position="739"/>
    </location>
</feature>
<feature type="site" description="Mammalian adaptation" evidence="1">
    <location>
        <position position="627"/>
    </location>
</feature>
<name>PB2_I77AA</name>
<protein>
    <recommendedName>
        <fullName evidence="1">Polymerase basic protein 2</fullName>
    </recommendedName>
    <alternativeName>
        <fullName evidence="1">RNA-directed RNA polymerase subunit P3</fullName>
    </alternativeName>
</protein>
<keyword id="KW-1157">Cap snatching</keyword>
<keyword id="KW-1262">Eukaryotic host gene expression shutoff by virus</keyword>
<keyword id="KW-1191">Eukaryotic host transcription shutoff by virus</keyword>
<keyword id="KW-1190">Host gene expression shutoff by virus</keyword>
<keyword id="KW-1045">Host mitochondrion</keyword>
<keyword id="KW-1048">Host nucleus</keyword>
<keyword id="KW-0945">Host-virus interaction</keyword>
<keyword id="KW-1090">Inhibition of host innate immune response by virus</keyword>
<keyword id="KW-1097">Inhibition of host MAVS by virus</keyword>
<keyword id="KW-1113">Inhibition of host RLR pathway by virus</keyword>
<keyword id="KW-1104">Inhibition of host RNA polymerase II by virus</keyword>
<keyword id="KW-0506">mRNA capping</keyword>
<keyword id="KW-0507">mRNA processing</keyword>
<keyword id="KW-0899">Viral immunoevasion</keyword>
<keyword id="KW-1195">Viral transcription</keyword>
<keyword id="KW-0946">Virion</keyword>
<comment type="function">
    <text evidence="1">Plays an essential role in transcription initiation and cap-stealing mechanism, in which cellular capped pre-mRNAs are used to generate primers for viral transcription. Recognizes and binds the 7-methylguanosine-containing cap of the target pre-RNA which is subsequently cleaved after 10-13 nucleotides by the viral protein PA. Plays a role in the initiation of the viral genome replication and modulates the activity of the ribonucleoprotein (RNP) complex. In addition, participates in the inhibition of type I interferon induction through interaction with and inhibition of the host mitochondrial antiviral signaling protein MAVS.</text>
</comment>
<comment type="subunit">
    <text evidence="1">Influenza RNA polymerase is composed of three subunits: PB1, PB2 and PA. Interacts (via N-terminus) with PB1 (via C-terminus). Interacts with nucleoprotein NP (via N-terminus). Interacts (via N-terminus) with host MAVS (via N-terminus); this interaction inhibits host innate immune response.</text>
</comment>
<comment type="subcellular location">
    <subcellularLocation>
        <location evidence="1">Virion</location>
    </subcellularLocation>
    <subcellularLocation>
        <location evidence="1">Host nucleus</location>
    </subcellularLocation>
    <subcellularLocation>
        <location evidence="1">Host mitochondrion</location>
    </subcellularLocation>
</comment>
<comment type="similarity">
    <text evidence="1">Belongs to the influenza viruses PB2 family.</text>
</comment>
<organism>
    <name type="scientific">Influenza A virus (strain A/Brazil/11/1978 H1N1)</name>
    <dbReference type="NCBI Taxonomy" id="393560"/>
    <lineage>
        <taxon>Viruses</taxon>
        <taxon>Riboviria</taxon>
        <taxon>Orthornavirae</taxon>
        <taxon>Negarnaviricota</taxon>
        <taxon>Polyploviricotina</taxon>
        <taxon>Insthoviricetes</taxon>
        <taxon>Articulavirales</taxon>
        <taxon>Orthomyxoviridae</taxon>
        <taxon>Alphainfluenzavirus</taxon>
        <taxon>Alphainfluenzavirus influenzae</taxon>
        <taxon>Influenza A virus</taxon>
    </lineage>
</organism>
<organismHost>
    <name type="scientific">Aves</name>
    <dbReference type="NCBI Taxonomy" id="8782"/>
</organismHost>
<organismHost>
    <name type="scientific">Homo sapiens</name>
    <name type="common">Human</name>
    <dbReference type="NCBI Taxonomy" id="9606"/>
</organismHost>
<organismHost>
    <name type="scientific">Sus scrofa</name>
    <name type="common">Pig</name>
    <dbReference type="NCBI Taxonomy" id="9823"/>
</organismHost>
<accession>A4GBY7</accession>
<evidence type="ECO:0000255" key="1">
    <source>
        <dbReference type="HAMAP-Rule" id="MF_04062"/>
    </source>
</evidence>
<gene>
    <name evidence="1" type="primary">PB2</name>
</gene>
<dbReference type="EMBL" id="CY020300">
    <property type="protein sequence ID" value="ABO38075.1"/>
    <property type="molecule type" value="Viral_cRNA"/>
</dbReference>
<dbReference type="BMRB" id="A4GBY7"/>
<dbReference type="SMR" id="A4GBY7"/>
<dbReference type="PRO" id="PR:A4GBY7"/>
<dbReference type="Proteomes" id="UP000008025">
    <property type="component" value="Genome"/>
</dbReference>
<dbReference type="GO" id="GO:0033650">
    <property type="term" value="C:host cell mitochondrion"/>
    <property type="evidence" value="ECO:0007669"/>
    <property type="project" value="UniProtKB-SubCell"/>
</dbReference>
<dbReference type="GO" id="GO:0042025">
    <property type="term" value="C:host cell nucleus"/>
    <property type="evidence" value="ECO:0007669"/>
    <property type="project" value="UniProtKB-SubCell"/>
</dbReference>
<dbReference type="GO" id="GO:0044423">
    <property type="term" value="C:virion component"/>
    <property type="evidence" value="ECO:0007669"/>
    <property type="project" value="UniProtKB-UniRule"/>
</dbReference>
<dbReference type="GO" id="GO:0003723">
    <property type="term" value="F:RNA binding"/>
    <property type="evidence" value="ECO:0007669"/>
    <property type="project" value="UniProtKB-UniRule"/>
</dbReference>
<dbReference type="GO" id="GO:0003968">
    <property type="term" value="F:RNA-directed RNA polymerase activity"/>
    <property type="evidence" value="ECO:0007669"/>
    <property type="project" value="UniProtKB-UniRule"/>
</dbReference>
<dbReference type="GO" id="GO:0006370">
    <property type="term" value="P:7-methylguanosine mRNA capping"/>
    <property type="evidence" value="ECO:0007669"/>
    <property type="project" value="UniProtKB-UniRule"/>
</dbReference>
<dbReference type="GO" id="GO:0075526">
    <property type="term" value="P:cap snatching"/>
    <property type="evidence" value="ECO:0007669"/>
    <property type="project" value="UniProtKB-UniRule"/>
</dbReference>
<dbReference type="GO" id="GO:0006351">
    <property type="term" value="P:DNA-templated transcription"/>
    <property type="evidence" value="ECO:0007669"/>
    <property type="project" value="UniProtKB-UniRule"/>
</dbReference>
<dbReference type="GO" id="GO:0039545">
    <property type="term" value="P:symbiont-mediated suppression of host cytoplasmic pattern recognition receptor signaling pathway via inhibition of MAVS activity"/>
    <property type="evidence" value="ECO:0007669"/>
    <property type="project" value="UniProtKB-UniRule"/>
</dbReference>
<dbReference type="GO" id="GO:0039657">
    <property type="term" value="P:symbiont-mediated suppression of host gene expression"/>
    <property type="evidence" value="ECO:0007669"/>
    <property type="project" value="UniProtKB-KW"/>
</dbReference>
<dbReference type="GO" id="GO:0039523">
    <property type="term" value="P:symbiont-mediated suppression of host mRNA transcription via inhibition of RNA polymerase II activity"/>
    <property type="evidence" value="ECO:0007669"/>
    <property type="project" value="UniProtKB-UniRule"/>
</dbReference>
<dbReference type="GO" id="GO:0039694">
    <property type="term" value="P:viral RNA genome replication"/>
    <property type="evidence" value="ECO:0007669"/>
    <property type="project" value="InterPro"/>
</dbReference>
<dbReference type="FunFam" id="3.30.30.90:FF:000001">
    <property type="entry name" value="Polymerase basic protein 2"/>
    <property type="match status" value="1"/>
</dbReference>
<dbReference type="Gene3D" id="3.30.30.90">
    <property type="entry name" value="Polymerase Basic Protein 2, C-terminal domain"/>
    <property type="match status" value="1"/>
</dbReference>
<dbReference type="HAMAP" id="MF_04062">
    <property type="entry name" value="INV_PB2"/>
    <property type="match status" value="1"/>
</dbReference>
<dbReference type="InterPro" id="IPR049110">
    <property type="entry name" value="Flu_PB2_2nd"/>
</dbReference>
<dbReference type="InterPro" id="IPR049114">
    <property type="entry name" value="Flu_PB2_6th"/>
</dbReference>
<dbReference type="InterPro" id="IPR049115">
    <property type="entry name" value="Flu_PB2_C"/>
</dbReference>
<dbReference type="InterPro" id="IPR048298">
    <property type="entry name" value="Flu_PB2_CAP-bd"/>
</dbReference>
<dbReference type="InterPro" id="IPR049111">
    <property type="entry name" value="Flu_PB2_middle"/>
</dbReference>
<dbReference type="InterPro" id="IPR049106">
    <property type="entry name" value="Flu_PB2_N"/>
</dbReference>
<dbReference type="InterPro" id="IPR001591">
    <property type="entry name" value="INV_PB2"/>
</dbReference>
<dbReference type="InterPro" id="IPR049113">
    <property type="entry name" value="PB2_helical"/>
</dbReference>
<dbReference type="InterPro" id="IPR037258">
    <property type="entry name" value="PDB2_C"/>
</dbReference>
<dbReference type="Pfam" id="PF20947">
    <property type="entry name" value="Flu_PB2_1st"/>
    <property type="match status" value="1"/>
</dbReference>
<dbReference type="Pfam" id="PF20948">
    <property type="entry name" value="Flu_PB2_2nd"/>
    <property type="match status" value="1"/>
</dbReference>
<dbReference type="Pfam" id="PF20949">
    <property type="entry name" value="Flu_PB2_3rd"/>
    <property type="match status" value="1"/>
</dbReference>
<dbReference type="Pfam" id="PF20950">
    <property type="entry name" value="Flu_PB2_4th"/>
    <property type="match status" value="1"/>
</dbReference>
<dbReference type="Pfam" id="PF00604">
    <property type="entry name" value="Flu_PB2_5th"/>
    <property type="match status" value="1"/>
</dbReference>
<dbReference type="Pfam" id="PF20951">
    <property type="entry name" value="Flu_PB2_6th"/>
    <property type="match status" value="1"/>
</dbReference>
<dbReference type="Pfam" id="PF20952">
    <property type="entry name" value="Flu_PB2_7th"/>
    <property type="match status" value="1"/>
</dbReference>
<dbReference type="SUPFAM" id="SSF160453">
    <property type="entry name" value="PB2 C-terminal domain-like"/>
    <property type="match status" value="1"/>
</dbReference>